<keyword id="KW-0012">Acyltransferase</keyword>
<keyword id="KW-0997">Cell inner membrane</keyword>
<keyword id="KW-1003">Cell membrane</keyword>
<keyword id="KW-0444">Lipid biosynthesis</keyword>
<keyword id="KW-0443">Lipid metabolism</keyword>
<keyword id="KW-0472">Membrane</keyword>
<keyword id="KW-0594">Phospholipid biosynthesis</keyword>
<keyword id="KW-1208">Phospholipid metabolism</keyword>
<keyword id="KW-0808">Transferase</keyword>
<evidence type="ECO:0000255" key="1">
    <source>
        <dbReference type="HAMAP-Rule" id="MF_00393"/>
    </source>
</evidence>
<proteinExistence type="inferred from homology"/>
<accession>A4XWX9</accession>
<name>PLSB_ECTM1</name>
<protein>
    <recommendedName>
        <fullName evidence="1">Glycerol-3-phosphate acyltransferase</fullName>
        <shortName evidence="1">GPAT</shortName>
        <ecNumber evidence="1">2.3.1.15</ecNumber>
    </recommendedName>
</protein>
<feature type="chain" id="PRO_1000049447" description="Glycerol-3-phosphate acyltransferase">
    <location>
        <begin position="1"/>
        <end position="827"/>
    </location>
</feature>
<feature type="short sequence motif" description="HXXXXD motif">
    <location>
        <begin position="309"/>
        <end position="314"/>
    </location>
</feature>
<organism>
    <name type="scientific">Ectopseudomonas mendocina (strain ymp)</name>
    <name type="common">Pseudomonas mendocina</name>
    <dbReference type="NCBI Taxonomy" id="399739"/>
    <lineage>
        <taxon>Bacteria</taxon>
        <taxon>Pseudomonadati</taxon>
        <taxon>Pseudomonadota</taxon>
        <taxon>Gammaproteobacteria</taxon>
        <taxon>Pseudomonadales</taxon>
        <taxon>Pseudomonadaceae</taxon>
        <taxon>Ectopseudomonas</taxon>
    </lineage>
</organism>
<gene>
    <name evidence="1" type="primary">plsB</name>
    <name type="ordered locus">Pmen_3091</name>
</gene>
<comment type="catalytic activity">
    <reaction evidence="1">
        <text>sn-glycerol 3-phosphate + an acyl-CoA = a 1-acyl-sn-glycero-3-phosphate + CoA</text>
        <dbReference type="Rhea" id="RHEA:15325"/>
        <dbReference type="ChEBI" id="CHEBI:57287"/>
        <dbReference type="ChEBI" id="CHEBI:57597"/>
        <dbReference type="ChEBI" id="CHEBI:57970"/>
        <dbReference type="ChEBI" id="CHEBI:58342"/>
        <dbReference type="EC" id="2.3.1.15"/>
    </reaction>
</comment>
<comment type="pathway">
    <text evidence="1">Phospholipid metabolism; CDP-diacylglycerol biosynthesis; CDP-diacylglycerol from sn-glycerol 3-phosphate: step 1/3.</text>
</comment>
<comment type="subcellular location">
    <subcellularLocation>
        <location evidence="1">Cell inner membrane</location>
        <topology evidence="1">Peripheral membrane protein</topology>
        <orientation evidence="1">Cytoplasmic side</orientation>
    </subcellularLocation>
</comment>
<comment type="domain">
    <text evidence="1">The HXXXXD motif is essential for acyltransferase activity and may constitute the binding site for the phosphate moiety of the glycerol-3-phosphate.</text>
</comment>
<comment type="similarity">
    <text evidence="1">Belongs to the GPAT/DAPAT family.</text>
</comment>
<sequence length="827" mass="93815">MTRSPLRRLAFGALRRLLYLWVRSETINQSAFTLKLDRSKPVFYVLQQPSVSDLAVVDRECTKAGLPRPVLPVAVGEHIEPAAFFYLTPEPDWFGRQDKRGISPTLDRVVTALGQHAVDDAQIVPVSVFWGQSPDRETSAWKLLFADSWAVTGRLRRLVSILILGRKTRVQFSTPIHLRELVEQDKGQERTLRMVHRILRVHFRNQKAAVIGPDVSHRRNLVKGLVHDPLVRQAIAEEAEREKISLEKAEAQALRYGNEIASDYTYTVIRFLELVLSWFWNKIYDGIKVHNVEGVRDIAQGHEVIYVPCHRSHIDYLLLSYLLFRNGLTPPHIAAGINLNMPVIGGLLRRGGAFFMRRTFKGNPLYTAVFNEYLHTLFSKGFPVEYFVEGGRSRTGRMLRPKTGMLAITLRSFLRSHRLPIVFVPVYIGYERVLEGRTYLGELRGASKKKESIFDLFKVLGALKQRFGQVSVNFGEPIKLAEFLDQQQPGWRQQELGPQYRPAWLNDTTNRLGERVARHLNEAASINPVNLVALALLSTSKLALDDRALARVLDLYLALLRAVPYSPHTTLPDGDGAALIEHVKGMDLLAEQKDALGKILYLDEQNAVLMTYYRNNVLHIFALPALLASFFQSSARISREQILRFTKALYPYLQAELFIRWEIEQLDDVVDQWLAAFVEQGLLKVEGDVYVRPAPSSRQFVLLTLLSRSVAQTLQRFYMAIALLLNAGQNAISAEELEDLCTVMAQRLSILHGLNAPEFFDKSLFRHFIQSLLDQGVLRQDEAGKLSHHPLLSELAEGAAKRVLPAEIRLSIRQVALDRNEDEPAAP</sequence>
<reference key="1">
    <citation type="submission" date="2007-04" db="EMBL/GenBank/DDBJ databases">
        <title>Complete sequence of Pseudomonas mendocina ymp.</title>
        <authorList>
            <consortium name="US DOE Joint Genome Institute"/>
            <person name="Copeland A."/>
            <person name="Lucas S."/>
            <person name="Lapidus A."/>
            <person name="Barry K."/>
            <person name="Glavina del Rio T."/>
            <person name="Dalin E."/>
            <person name="Tice H."/>
            <person name="Pitluck S."/>
            <person name="Kiss H."/>
            <person name="Brettin T."/>
            <person name="Detter J.C."/>
            <person name="Bruce D."/>
            <person name="Han C."/>
            <person name="Schmutz J."/>
            <person name="Larimer F."/>
            <person name="Land M."/>
            <person name="Hauser L."/>
            <person name="Kyrpides N."/>
            <person name="Mikhailova N."/>
            <person name="Hersman L."/>
            <person name="Dubois J."/>
            <person name="Maurice P."/>
            <person name="Richardson P."/>
        </authorList>
    </citation>
    <scope>NUCLEOTIDE SEQUENCE [LARGE SCALE GENOMIC DNA]</scope>
    <source>
        <strain>ymp</strain>
    </source>
</reference>
<dbReference type="EC" id="2.3.1.15" evidence="1"/>
<dbReference type="EMBL" id="CP000680">
    <property type="protein sequence ID" value="ABP85845.1"/>
    <property type="molecule type" value="Genomic_DNA"/>
</dbReference>
<dbReference type="SMR" id="A4XWX9"/>
<dbReference type="STRING" id="399739.Pmen_3091"/>
<dbReference type="KEGG" id="pmy:Pmen_3091"/>
<dbReference type="PATRIC" id="fig|399739.8.peg.3131"/>
<dbReference type="eggNOG" id="COG2937">
    <property type="taxonomic scope" value="Bacteria"/>
</dbReference>
<dbReference type="HOGENOM" id="CLU_015407_0_0_6"/>
<dbReference type="OrthoDB" id="335193at2"/>
<dbReference type="UniPathway" id="UPA00557">
    <property type="reaction ID" value="UER00612"/>
</dbReference>
<dbReference type="GO" id="GO:0005886">
    <property type="term" value="C:plasma membrane"/>
    <property type="evidence" value="ECO:0007669"/>
    <property type="project" value="UniProtKB-SubCell"/>
</dbReference>
<dbReference type="GO" id="GO:0004366">
    <property type="term" value="F:glycerol-3-phosphate O-acyltransferase activity"/>
    <property type="evidence" value="ECO:0007669"/>
    <property type="project" value="UniProtKB-UniRule"/>
</dbReference>
<dbReference type="GO" id="GO:0016024">
    <property type="term" value="P:CDP-diacylglycerol biosynthetic process"/>
    <property type="evidence" value="ECO:0007669"/>
    <property type="project" value="UniProtKB-UniRule"/>
</dbReference>
<dbReference type="GO" id="GO:0006631">
    <property type="term" value="P:fatty acid metabolic process"/>
    <property type="evidence" value="ECO:0007669"/>
    <property type="project" value="TreeGrafter"/>
</dbReference>
<dbReference type="CDD" id="cd07993">
    <property type="entry name" value="LPLAT_DHAPAT-like"/>
    <property type="match status" value="1"/>
</dbReference>
<dbReference type="HAMAP" id="MF_00393">
    <property type="entry name" value="Glyc3P_acyltrans"/>
    <property type="match status" value="1"/>
</dbReference>
<dbReference type="InterPro" id="IPR022284">
    <property type="entry name" value="GPAT/DHAPAT"/>
</dbReference>
<dbReference type="InterPro" id="IPR045520">
    <property type="entry name" value="GPAT/DHAPAT_C"/>
</dbReference>
<dbReference type="InterPro" id="IPR041728">
    <property type="entry name" value="GPAT/DHAPAT_LPLAT"/>
</dbReference>
<dbReference type="InterPro" id="IPR028354">
    <property type="entry name" value="GPAT_PlsB"/>
</dbReference>
<dbReference type="InterPro" id="IPR002123">
    <property type="entry name" value="Plipid/glycerol_acylTrfase"/>
</dbReference>
<dbReference type="NCBIfam" id="TIGR03703">
    <property type="entry name" value="plsB"/>
    <property type="match status" value="1"/>
</dbReference>
<dbReference type="NCBIfam" id="NF003441">
    <property type="entry name" value="PRK04974.1"/>
    <property type="match status" value="1"/>
</dbReference>
<dbReference type="PANTHER" id="PTHR12563:SF17">
    <property type="entry name" value="DIHYDROXYACETONE PHOSPHATE ACYLTRANSFERASE"/>
    <property type="match status" value="1"/>
</dbReference>
<dbReference type="PANTHER" id="PTHR12563">
    <property type="entry name" value="GLYCEROL-3-PHOSPHATE ACYLTRANSFERASE"/>
    <property type="match status" value="1"/>
</dbReference>
<dbReference type="Pfam" id="PF01553">
    <property type="entry name" value="Acyltransferase"/>
    <property type="match status" value="1"/>
</dbReference>
<dbReference type="Pfam" id="PF19277">
    <property type="entry name" value="GPAT_C"/>
    <property type="match status" value="1"/>
</dbReference>
<dbReference type="PIRSF" id="PIRSF500064">
    <property type="entry name" value="GPAT"/>
    <property type="match status" value="1"/>
</dbReference>
<dbReference type="PIRSF" id="PIRSF000437">
    <property type="entry name" value="GPAT_DHAPAT"/>
    <property type="match status" value="1"/>
</dbReference>
<dbReference type="SMART" id="SM00563">
    <property type="entry name" value="PlsC"/>
    <property type="match status" value="1"/>
</dbReference>
<dbReference type="SUPFAM" id="SSF69593">
    <property type="entry name" value="Glycerol-3-phosphate (1)-acyltransferase"/>
    <property type="match status" value="1"/>
</dbReference>